<comment type="function">
    <text evidence="1">Single strand-specific metallo-endoribonuclease involved in late-stage 70S ribosome quality control and in maturation of the 3' terminus of the 16S rRNA.</text>
</comment>
<comment type="cofactor">
    <cofactor evidence="1">
        <name>Zn(2+)</name>
        <dbReference type="ChEBI" id="CHEBI:29105"/>
    </cofactor>
    <text evidence="1">Binds 1 zinc ion.</text>
</comment>
<comment type="subcellular location">
    <subcellularLocation>
        <location evidence="1">Cytoplasm</location>
    </subcellularLocation>
</comment>
<comment type="similarity">
    <text evidence="1">Belongs to the endoribonuclease YbeY family.</text>
</comment>
<dbReference type="EC" id="3.1.-.-" evidence="1"/>
<dbReference type="EMBL" id="BX548175">
    <property type="protein sequence ID" value="CAE22239.1"/>
    <property type="molecule type" value="Genomic_DNA"/>
</dbReference>
<dbReference type="RefSeq" id="WP_011131430.1">
    <property type="nucleotide sequence ID" value="NC_005071.1"/>
</dbReference>
<dbReference type="SMR" id="Q7V498"/>
<dbReference type="KEGG" id="pmt:PMT_2065"/>
<dbReference type="eggNOG" id="COG0319">
    <property type="taxonomic scope" value="Bacteria"/>
</dbReference>
<dbReference type="HOGENOM" id="CLU_106710_3_0_3"/>
<dbReference type="OrthoDB" id="9807740at2"/>
<dbReference type="Proteomes" id="UP000001423">
    <property type="component" value="Chromosome"/>
</dbReference>
<dbReference type="GO" id="GO:0005737">
    <property type="term" value="C:cytoplasm"/>
    <property type="evidence" value="ECO:0007669"/>
    <property type="project" value="UniProtKB-SubCell"/>
</dbReference>
<dbReference type="GO" id="GO:0004222">
    <property type="term" value="F:metalloendopeptidase activity"/>
    <property type="evidence" value="ECO:0007669"/>
    <property type="project" value="InterPro"/>
</dbReference>
<dbReference type="GO" id="GO:0004521">
    <property type="term" value="F:RNA endonuclease activity"/>
    <property type="evidence" value="ECO:0007669"/>
    <property type="project" value="UniProtKB-UniRule"/>
</dbReference>
<dbReference type="GO" id="GO:0008270">
    <property type="term" value="F:zinc ion binding"/>
    <property type="evidence" value="ECO:0007669"/>
    <property type="project" value="UniProtKB-UniRule"/>
</dbReference>
<dbReference type="GO" id="GO:0006364">
    <property type="term" value="P:rRNA processing"/>
    <property type="evidence" value="ECO:0007669"/>
    <property type="project" value="UniProtKB-UniRule"/>
</dbReference>
<dbReference type="Gene3D" id="3.40.390.30">
    <property type="entry name" value="Metalloproteases ('zincins'), catalytic domain"/>
    <property type="match status" value="1"/>
</dbReference>
<dbReference type="HAMAP" id="MF_00009">
    <property type="entry name" value="Endoribonucl_YbeY"/>
    <property type="match status" value="1"/>
</dbReference>
<dbReference type="InterPro" id="IPR023091">
    <property type="entry name" value="MetalPrtase_cat_dom_sf_prd"/>
</dbReference>
<dbReference type="InterPro" id="IPR002036">
    <property type="entry name" value="YbeY"/>
</dbReference>
<dbReference type="InterPro" id="IPR020549">
    <property type="entry name" value="YbeY_CS"/>
</dbReference>
<dbReference type="NCBIfam" id="TIGR00043">
    <property type="entry name" value="rRNA maturation RNase YbeY"/>
    <property type="match status" value="1"/>
</dbReference>
<dbReference type="PANTHER" id="PTHR46986">
    <property type="entry name" value="ENDORIBONUCLEASE YBEY, CHLOROPLASTIC"/>
    <property type="match status" value="1"/>
</dbReference>
<dbReference type="PANTHER" id="PTHR46986:SF1">
    <property type="entry name" value="ENDORIBONUCLEASE YBEY, CHLOROPLASTIC"/>
    <property type="match status" value="1"/>
</dbReference>
<dbReference type="Pfam" id="PF02130">
    <property type="entry name" value="YbeY"/>
    <property type="match status" value="1"/>
</dbReference>
<dbReference type="SUPFAM" id="SSF55486">
    <property type="entry name" value="Metalloproteases ('zincins'), catalytic domain"/>
    <property type="match status" value="1"/>
</dbReference>
<dbReference type="PROSITE" id="PS01306">
    <property type="entry name" value="UPF0054"/>
    <property type="match status" value="1"/>
</dbReference>
<organism>
    <name type="scientific">Prochlorococcus marinus (strain MIT 9313)</name>
    <dbReference type="NCBI Taxonomy" id="74547"/>
    <lineage>
        <taxon>Bacteria</taxon>
        <taxon>Bacillati</taxon>
        <taxon>Cyanobacteriota</taxon>
        <taxon>Cyanophyceae</taxon>
        <taxon>Synechococcales</taxon>
        <taxon>Prochlorococcaceae</taxon>
        <taxon>Prochlorococcus</taxon>
    </lineage>
</organism>
<proteinExistence type="inferred from homology"/>
<name>YBEY_PROMM</name>
<protein>
    <recommendedName>
        <fullName evidence="1">Endoribonuclease YbeY</fullName>
        <ecNumber evidence="1">3.1.-.-</ecNumber>
    </recommendedName>
</protein>
<sequence>MSALQTSPINLDLDLAFHPANDDALTSLVDADTKRRLTHASPWQQDLTAWIESVRRDPTLTCPEIVRLSPMLSLGLQLTDDATITELNHSWRQRSESTDVLSFPALDNSLVLPTDTCVELGDIVVSVQTAQRQAKQHSHELGLELRWLVSHGLLHLLGWDHPTDQSLKTMLSYQEQLLSINGKVHHH</sequence>
<reference key="1">
    <citation type="journal article" date="2003" name="Nature">
        <title>Genome divergence in two Prochlorococcus ecotypes reflects oceanic niche differentiation.</title>
        <authorList>
            <person name="Rocap G."/>
            <person name="Larimer F.W."/>
            <person name="Lamerdin J.E."/>
            <person name="Malfatti S."/>
            <person name="Chain P."/>
            <person name="Ahlgren N.A."/>
            <person name="Arellano A."/>
            <person name="Coleman M."/>
            <person name="Hauser L."/>
            <person name="Hess W.R."/>
            <person name="Johnson Z.I."/>
            <person name="Land M.L."/>
            <person name="Lindell D."/>
            <person name="Post A.F."/>
            <person name="Regala W."/>
            <person name="Shah M."/>
            <person name="Shaw S.L."/>
            <person name="Steglich C."/>
            <person name="Sullivan M.B."/>
            <person name="Ting C.S."/>
            <person name="Tolonen A."/>
            <person name="Webb E.A."/>
            <person name="Zinser E.R."/>
            <person name="Chisholm S.W."/>
        </authorList>
    </citation>
    <scope>NUCLEOTIDE SEQUENCE [LARGE SCALE GENOMIC DNA]</scope>
    <source>
        <strain>MIT 9313</strain>
    </source>
</reference>
<keyword id="KW-0963">Cytoplasm</keyword>
<keyword id="KW-0255">Endonuclease</keyword>
<keyword id="KW-0378">Hydrolase</keyword>
<keyword id="KW-0479">Metal-binding</keyword>
<keyword id="KW-0540">Nuclease</keyword>
<keyword id="KW-1185">Reference proteome</keyword>
<keyword id="KW-0690">Ribosome biogenesis</keyword>
<keyword id="KW-0698">rRNA processing</keyword>
<keyword id="KW-0862">Zinc</keyword>
<evidence type="ECO:0000255" key="1">
    <source>
        <dbReference type="HAMAP-Rule" id="MF_00009"/>
    </source>
</evidence>
<feature type="chain" id="PRO_0000102508" description="Endoribonuclease YbeY">
    <location>
        <begin position="1"/>
        <end position="187"/>
    </location>
</feature>
<feature type="binding site" evidence="1">
    <location>
        <position position="151"/>
    </location>
    <ligand>
        <name>Zn(2+)</name>
        <dbReference type="ChEBI" id="CHEBI:29105"/>
        <note>catalytic</note>
    </ligand>
</feature>
<feature type="binding site" evidence="1">
    <location>
        <position position="155"/>
    </location>
    <ligand>
        <name>Zn(2+)</name>
        <dbReference type="ChEBI" id="CHEBI:29105"/>
        <note>catalytic</note>
    </ligand>
</feature>
<feature type="binding site" evidence="1">
    <location>
        <position position="161"/>
    </location>
    <ligand>
        <name>Zn(2+)</name>
        <dbReference type="ChEBI" id="CHEBI:29105"/>
        <note>catalytic</note>
    </ligand>
</feature>
<accession>Q7V498</accession>
<gene>
    <name evidence="1" type="primary">ybeY</name>
    <name type="ordered locus">PMT_2065</name>
</gene>